<protein>
    <recommendedName>
        <fullName>NADH-ubiquinone oxidoreductase chain 4L</fullName>
        <ecNumber>7.1.1.2</ecNumber>
    </recommendedName>
    <alternativeName>
        <fullName>NADH dehydrogenase subunit 4L</fullName>
    </alternativeName>
</protein>
<keyword id="KW-0249">Electron transport</keyword>
<keyword id="KW-0472">Membrane</keyword>
<keyword id="KW-0496">Mitochondrion</keyword>
<keyword id="KW-0999">Mitochondrion inner membrane</keyword>
<keyword id="KW-0520">NAD</keyword>
<keyword id="KW-1185">Reference proteome</keyword>
<keyword id="KW-0679">Respiratory chain</keyword>
<keyword id="KW-1278">Translocase</keyword>
<keyword id="KW-0812">Transmembrane</keyword>
<keyword id="KW-1133">Transmembrane helix</keyword>
<keyword id="KW-0813">Transport</keyword>
<keyword id="KW-0830">Ubiquinone</keyword>
<organism>
    <name type="scientific">Puma concolor</name>
    <name type="common">Mountain lion</name>
    <name type="synonym">Felis concolor</name>
    <dbReference type="NCBI Taxonomy" id="9696"/>
    <lineage>
        <taxon>Eukaryota</taxon>
        <taxon>Metazoa</taxon>
        <taxon>Chordata</taxon>
        <taxon>Craniata</taxon>
        <taxon>Vertebrata</taxon>
        <taxon>Euteleostomi</taxon>
        <taxon>Mammalia</taxon>
        <taxon>Eutheria</taxon>
        <taxon>Laurasiatheria</taxon>
        <taxon>Carnivora</taxon>
        <taxon>Feliformia</taxon>
        <taxon>Felidae</taxon>
        <taxon>Felinae</taxon>
        <taxon>Puma</taxon>
    </lineage>
</organism>
<proteinExistence type="inferred from homology"/>
<evidence type="ECO:0000250" key="1">
    <source>
        <dbReference type="UniProtKB" id="P03901"/>
    </source>
</evidence>
<evidence type="ECO:0000250" key="2">
    <source>
        <dbReference type="UniProtKB" id="P03902"/>
    </source>
</evidence>
<evidence type="ECO:0000255" key="3"/>
<evidence type="ECO:0000305" key="4"/>
<name>NU4LM_PUMCO</name>
<feature type="chain" id="PRO_0000275114" description="NADH-ubiquinone oxidoreductase chain 4L">
    <location>
        <begin position="1"/>
        <end position="98"/>
    </location>
</feature>
<feature type="transmembrane region" description="Helical" evidence="3">
    <location>
        <begin position="1"/>
        <end position="21"/>
    </location>
</feature>
<feature type="transmembrane region" description="Helical" evidence="3">
    <location>
        <begin position="29"/>
        <end position="49"/>
    </location>
</feature>
<feature type="transmembrane region" description="Helical" evidence="3">
    <location>
        <begin position="61"/>
        <end position="81"/>
    </location>
</feature>
<accession>Q3L6Z6</accession>
<dbReference type="EC" id="7.1.1.2"/>
<dbReference type="EMBL" id="AY598492">
    <property type="protein sequence ID" value="AAU00438.1"/>
    <property type="molecule type" value="Genomic_DNA"/>
</dbReference>
<dbReference type="RefSeq" id="YP_004940596.1">
    <property type="nucleotide sequence ID" value="NC_016470.1"/>
</dbReference>
<dbReference type="SMR" id="Q3L6Z6"/>
<dbReference type="GeneID" id="11473386"/>
<dbReference type="KEGG" id="pcoo:11473386"/>
<dbReference type="CTD" id="4539"/>
<dbReference type="OrthoDB" id="19063at33554"/>
<dbReference type="Proteomes" id="UP000515131">
    <property type="component" value="Mitochondrion MT"/>
</dbReference>
<dbReference type="GO" id="GO:0005743">
    <property type="term" value="C:mitochondrial inner membrane"/>
    <property type="evidence" value="ECO:0000250"/>
    <property type="project" value="UniProtKB"/>
</dbReference>
<dbReference type="GO" id="GO:0045271">
    <property type="term" value="C:respiratory chain complex I"/>
    <property type="evidence" value="ECO:0000250"/>
    <property type="project" value="UniProtKB"/>
</dbReference>
<dbReference type="GO" id="GO:0008137">
    <property type="term" value="F:NADH dehydrogenase (ubiquinone) activity"/>
    <property type="evidence" value="ECO:0000250"/>
    <property type="project" value="UniProtKB"/>
</dbReference>
<dbReference type="GO" id="GO:0042773">
    <property type="term" value="P:ATP synthesis coupled electron transport"/>
    <property type="evidence" value="ECO:0007669"/>
    <property type="project" value="InterPro"/>
</dbReference>
<dbReference type="FunFam" id="1.10.287.3510:FF:000002">
    <property type="entry name" value="NADH-ubiquinone oxidoreductase chain 4L"/>
    <property type="match status" value="1"/>
</dbReference>
<dbReference type="Gene3D" id="1.10.287.3510">
    <property type="match status" value="1"/>
</dbReference>
<dbReference type="InterPro" id="IPR001133">
    <property type="entry name" value="NADH_UbQ_OxRdtase_chain4L/K"/>
</dbReference>
<dbReference type="InterPro" id="IPR039428">
    <property type="entry name" value="NUOK/Mnh_C1-like"/>
</dbReference>
<dbReference type="PANTHER" id="PTHR11434:SF0">
    <property type="entry name" value="NADH-UBIQUINONE OXIDOREDUCTASE CHAIN 4L"/>
    <property type="match status" value="1"/>
</dbReference>
<dbReference type="PANTHER" id="PTHR11434">
    <property type="entry name" value="NADH-UBIQUINONE OXIDOREDUCTASE SUBUNIT ND4L"/>
    <property type="match status" value="1"/>
</dbReference>
<dbReference type="Pfam" id="PF00420">
    <property type="entry name" value="Oxidored_q2"/>
    <property type="match status" value="1"/>
</dbReference>
<gene>
    <name type="primary">MT-ND4L</name>
    <name type="synonym">MTND4L</name>
    <name type="synonym">NADH4L</name>
    <name type="synonym">ND4L</name>
</gene>
<geneLocation type="mitochondrion"/>
<sequence length="98" mass="10868">MSMVYINIFLAFTMSLMGLLMYRSHLMSSLLCLEGMMLSLFIMMAVAILNNHFTLASMTPIILLVFAACEAALGLSLLVMVSNTYGTDYVQNLNLLQC</sequence>
<reference key="1">
    <citation type="journal article" date="2005" name="Mol. Phylogenet. Evol.">
        <title>A phylogeny of the Caniformia (order Carnivora) based on 12 complete protein-coding mitochondrial genes.</title>
        <authorList>
            <person name="Delisle I."/>
            <person name="Strobeck C."/>
        </authorList>
    </citation>
    <scope>NUCLEOTIDE SEQUENCE [GENOMIC DNA]</scope>
</reference>
<comment type="function">
    <text evidence="1">Core subunit of the mitochondrial membrane respiratory chain NADH dehydrogenase (Complex I) which catalyzes electron transfer from NADH through the respiratory chain, using ubiquinone as an electron acceptor. Part of the enzyme membrane arm which is embedded in the lipid bilayer and involved in proton translocation.</text>
</comment>
<comment type="catalytic activity">
    <reaction evidence="1">
        <text>a ubiquinone + NADH + 5 H(+)(in) = a ubiquinol + NAD(+) + 4 H(+)(out)</text>
        <dbReference type="Rhea" id="RHEA:29091"/>
        <dbReference type="Rhea" id="RHEA-COMP:9565"/>
        <dbReference type="Rhea" id="RHEA-COMP:9566"/>
        <dbReference type="ChEBI" id="CHEBI:15378"/>
        <dbReference type="ChEBI" id="CHEBI:16389"/>
        <dbReference type="ChEBI" id="CHEBI:17976"/>
        <dbReference type="ChEBI" id="CHEBI:57540"/>
        <dbReference type="ChEBI" id="CHEBI:57945"/>
        <dbReference type="EC" id="7.1.1.2"/>
    </reaction>
    <physiologicalReaction direction="left-to-right" evidence="1">
        <dbReference type="Rhea" id="RHEA:29092"/>
    </physiologicalReaction>
</comment>
<comment type="subunit">
    <text evidence="2">Core subunit of respiratory chain NADH dehydrogenase (Complex I) which is composed of 45 different subunits.</text>
</comment>
<comment type="subcellular location">
    <subcellularLocation>
        <location evidence="2">Mitochondrion inner membrane</location>
        <topology evidence="3">Multi-pass membrane protein</topology>
    </subcellularLocation>
</comment>
<comment type="similarity">
    <text evidence="4">Belongs to the complex I subunit 4L family.</text>
</comment>